<evidence type="ECO:0000250" key="1">
    <source>
        <dbReference type="UniProtKB" id="Q8GYX9"/>
    </source>
</evidence>
<evidence type="ECO:0000256" key="2">
    <source>
        <dbReference type="SAM" id="MobiDB-lite"/>
    </source>
</evidence>
<evidence type="ECO:0000269" key="3">
    <source>
    </source>
</evidence>
<evidence type="ECO:0000303" key="4">
    <source>
    </source>
</evidence>
<evidence type="ECO:0000305" key="5"/>
<evidence type="ECO:0000312" key="6">
    <source>
        <dbReference type="Araport" id="AT1G70950"/>
    </source>
</evidence>
<evidence type="ECO:0000312" key="7">
    <source>
        <dbReference type="EMBL" id="AAD55508.1"/>
    </source>
</evidence>
<name>WDL7_ARATH</name>
<dbReference type="EMBL" id="AC008148">
    <property type="protein sequence ID" value="AAD55508.1"/>
    <property type="status" value="ALT_SEQ"/>
    <property type="molecule type" value="Genomic_DNA"/>
</dbReference>
<dbReference type="EMBL" id="CP002684">
    <property type="protein sequence ID" value="AEE35143.1"/>
    <property type="molecule type" value="Genomic_DNA"/>
</dbReference>
<dbReference type="EMBL" id="AK176599">
    <property type="protein sequence ID" value="BAD44362.1"/>
    <property type="molecule type" value="mRNA"/>
</dbReference>
<dbReference type="EMBL" id="BT012555">
    <property type="protein sequence ID" value="AAS99699.1"/>
    <property type="molecule type" value="mRNA"/>
</dbReference>
<dbReference type="PIR" id="H96733">
    <property type="entry name" value="H96733"/>
</dbReference>
<dbReference type="RefSeq" id="NP_177251.2">
    <property type="nucleotide sequence ID" value="NM_105763.4"/>
</dbReference>
<dbReference type="SMR" id="Q67Y69"/>
<dbReference type="FunCoup" id="Q67Y69">
    <property type="interactions" value="49"/>
</dbReference>
<dbReference type="STRING" id="3702.Q67Y69"/>
<dbReference type="PaxDb" id="3702-AT1G70950.1"/>
<dbReference type="ProteomicsDB" id="242689"/>
<dbReference type="DNASU" id="843433"/>
<dbReference type="EnsemblPlants" id="AT1G70950.1">
    <property type="protein sequence ID" value="AT1G70950.1"/>
    <property type="gene ID" value="AT1G70950"/>
</dbReference>
<dbReference type="GeneID" id="843433"/>
<dbReference type="Gramene" id="AT1G70950.1">
    <property type="protein sequence ID" value="AT1G70950.1"/>
    <property type="gene ID" value="AT1G70950"/>
</dbReference>
<dbReference type="KEGG" id="ath:AT1G70950"/>
<dbReference type="Araport" id="AT1G70950"/>
<dbReference type="TAIR" id="AT1G70950"/>
<dbReference type="eggNOG" id="ENOG502QQEQ">
    <property type="taxonomic scope" value="Eukaryota"/>
</dbReference>
<dbReference type="HOGENOM" id="CLU_028939_0_0_1"/>
<dbReference type="InParanoid" id="Q67Y69"/>
<dbReference type="OMA" id="PIATNRC"/>
<dbReference type="PhylomeDB" id="Q67Y69"/>
<dbReference type="PRO" id="PR:Q67Y69"/>
<dbReference type="Proteomes" id="UP000006548">
    <property type="component" value="Chromosome 1"/>
</dbReference>
<dbReference type="ExpressionAtlas" id="Q67Y69">
    <property type="expression patterns" value="baseline and differential"/>
</dbReference>
<dbReference type="GO" id="GO:0055028">
    <property type="term" value="C:cortical microtubule"/>
    <property type="evidence" value="ECO:0000314"/>
    <property type="project" value="TAIR"/>
</dbReference>
<dbReference type="GO" id="GO:0009737">
    <property type="term" value="P:response to abscisic acid"/>
    <property type="evidence" value="ECO:0000314"/>
    <property type="project" value="TAIR"/>
</dbReference>
<dbReference type="InterPro" id="IPR027329">
    <property type="entry name" value="TPX2_C"/>
</dbReference>
<dbReference type="InterPro" id="IPR044216">
    <property type="entry name" value="WDL7"/>
</dbReference>
<dbReference type="PANTHER" id="PTHR47067:SF6">
    <property type="entry name" value="PROTEIN WVD2-LIKE 7"/>
    <property type="match status" value="1"/>
</dbReference>
<dbReference type="PANTHER" id="PTHR47067">
    <property type="entry name" value="TPX2 (TARGETING PROTEIN FOR XKLP2) PROTEIN FAMILY-RELATED"/>
    <property type="match status" value="1"/>
</dbReference>
<dbReference type="Pfam" id="PF06886">
    <property type="entry name" value="TPX2"/>
    <property type="match status" value="1"/>
</dbReference>
<proteinExistence type="evidence at transcript level"/>
<keyword id="KW-0963">Cytoplasm</keyword>
<keyword id="KW-0206">Cytoskeleton</keyword>
<keyword id="KW-0493">Microtubule</keyword>
<keyword id="KW-1185">Reference proteome</keyword>
<organism>
    <name type="scientific">Arabidopsis thaliana</name>
    <name type="common">Mouse-ear cress</name>
    <dbReference type="NCBI Taxonomy" id="3702"/>
    <lineage>
        <taxon>Eukaryota</taxon>
        <taxon>Viridiplantae</taxon>
        <taxon>Streptophyta</taxon>
        <taxon>Embryophyta</taxon>
        <taxon>Tracheophyta</taxon>
        <taxon>Spermatophyta</taxon>
        <taxon>Magnoliopsida</taxon>
        <taxon>eudicotyledons</taxon>
        <taxon>Gunneridae</taxon>
        <taxon>Pentapetalae</taxon>
        <taxon>rosids</taxon>
        <taxon>malvids</taxon>
        <taxon>Brassicales</taxon>
        <taxon>Brassicaceae</taxon>
        <taxon>Camelineae</taxon>
        <taxon>Arabidopsis</taxon>
    </lineage>
</organism>
<comment type="function">
    <text evidence="1">Microtubule-associated protein (MAP) that regulates the orientation of interphase cortical microtubules.</text>
</comment>
<comment type="subcellular location">
    <subcellularLocation>
        <location evidence="1">Cytoplasm</location>
        <location evidence="1">Cytoskeleton</location>
    </subcellularLocation>
</comment>
<comment type="tissue specificity">
    <text evidence="3">Expressed in seedlings.</text>
</comment>
<comment type="similarity">
    <text evidence="5">Belongs to the TPX2 family.</text>
</comment>
<comment type="sequence caution" evidence="5">
    <conflict type="erroneous gene model prediction">
        <sequence resource="EMBL-CDS" id="AAD55508"/>
    </conflict>
</comment>
<accession>Q67Y69</accession>
<accession>Q9SSK3</accession>
<gene>
    <name evidence="4" type="primary">WDL7</name>
    <name evidence="6" type="ordered locus">At1g70950</name>
    <name evidence="7" type="ORF">F15H11.15</name>
</gene>
<feature type="chain" id="PRO_0000435679" description="Protein WVD2-like 7">
    <location>
        <begin position="1"/>
        <end position="478"/>
    </location>
</feature>
<feature type="region of interest" description="Disordered" evidence="2">
    <location>
        <begin position="201"/>
        <end position="326"/>
    </location>
</feature>
<feature type="region of interest" description="Disordered" evidence="2">
    <location>
        <begin position="385"/>
        <end position="420"/>
    </location>
</feature>
<feature type="compositionally biased region" description="Basic and acidic residues" evidence="2">
    <location>
        <begin position="208"/>
        <end position="217"/>
    </location>
</feature>
<feature type="compositionally biased region" description="Polar residues" evidence="2">
    <location>
        <begin position="219"/>
        <end position="232"/>
    </location>
</feature>
<feature type="compositionally biased region" description="Polar residues" evidence="2">
    <location>
        <begin position="264"/>
        <end position="277"/>
    </location>
</feature>
<feature type="compositionally biased region" description="Basic and acidic residues" evidence="2">
    <location>
        <begin position="278"/>
        <end position="289"/>
    </location>
</feature>
<feature type="compositionally biased region" description="Polar residues" evidence="2">
    <location>
        <begin position="309"/>
        <end position="326"/>
    </location>
</feature>
<feature type="compositionally biased region" description="Polar residues" evidence="2">
    <location>
        <begin position="407"/>
        <end position="420"/>
    </location>
</feature>
<protein>
    <recommendedName>
        <fullName evidence="5">Protein WVD2-like 7</fullName>
    </recommendedName>
</protein>
<sequence>MAGEIQDPFSLSFQGNSIHSGSISFGRFEKEGLSWEKRSSFSHNRYLEEVDKCSKPGSVTEMKAHFEAHFKKKGIRFPASLESQTWGVHQTSNEPDDEAVHATESFEDYRSDGSFSEDTSQSNSVCNYSHEQEKCGQGKSQCEFDEESDHCVSYDEILVNSDEVIELDEEEGGGDHGRVADLVECENLGPPEMPQEIVIQDSALVEEAGSKLDEHASKKPSNSMETPSSSVNVKPIIPNDVRVTKASTKGHDVTPKAASRRTKGSSLSSNSKTNVDAKSQKELRPKKTIESQPKSSNKTETRPPIATNRCKTSTTSSKLEMSTGSTSFRFKCSERAEKRKEFYMKLEEKIHAKKTETNQVQAKTQQKAEAEIKQFRKSLNFKATPMPSFYNIGTRPVSHNKTEPSKVAQSRSRPATSASITNRAVTRVSYKHGFEEAEMVKVMVSNRKQSAAKDSDLQKGNLMAVEMKQQIGARRSRN</sequence>
<reference key="1">
    <citation type="journal article" date="2000" name="Nature">
        <title>Sequence and analysis of chromosome 1 of the plant Arabidopsis thaliana.</title>
        <authorList>
            <person name="Theologis A."/>
            <person name="Ecker J.R."/>
            <person name="Palm C.J."/>
            <person name="Federspiel N.A."/>
            <person name="Kaul S."/>
            <person name="White O."/>
            <person name="Alonso J."/>
            <person name="Altafi H."/>
            <person name="Araujo R."/>
            <person name="Bowman C.L."/>
            <person name="Brooks S.Y."/>
            <person name="Buehler E."/>
            <person name="Chan A."/>
            <person name="Chao Q."/>
            <person name="Chen H."/>
            <person name="Cheuk R.F."/>
            <person name="Chin C.W."/>
            <person name="Chung M.K."/>
            <person name="Conn L."/>
            <person name="Conway A.B."/>
            <person name="Conway A.R."/>
            <person name="Creasy T.H."/>
            <person name="Dewar K."/>
            <person name="Dunn P."/>
            <person name="Etgu P."/>
            <person name="Feldblyum T.V."/>
            <person name="Feng J.-D."/>
            <person name="Fong B."/>
            <person name="Fujii C.Y."/>
            <person name="Gill J.E."/>
            <person name="Goldsmith A.D."/>
            <person name="Haas B."/>
            <person name="Hansen N.F."/>
            <person name="Hughes B."/>
            <person name="Huizar L."/>
            <person name="Hunter J.L."/>
            <person name="Jenkins J."/>
            <person name="Johnson-Hopson C."/>
            <person name="Khan S."/>
            <person name="Khaykin E."/>
            <person name="Kim C.J."/>
            <person name="Koo H.L."/>
            <person name="Kremenetskaia I."/>
            <person name="Kurtz D.B."/>
            <person name="Kwan A."/>
            <person name="Lam B."/>
            <person name="Langin-Hooper S."/>
            <person name="Lee A."/>
            <person name="Lee J.M."/>
            <person name="Lenz C.A."/>
            <person name="Li J.H."/>
            <person name="Li Y.-P."/>
            <person name="Lin X."/>
            <person name="Liu S.X."/>
            <person name="Liu Z.A."/>
            <person name="Luros J.S."/>
            <person name="Maiti R."/>
            <person name="Marziali A."/>
            <person name="Militscher J."/>
            <person name="Miranda M."/>
            <person name="Nguyen M."/>
            <person name="Nierman W.C."/>
            <person name="Osborne B.I."/>
            <person name="Pai G."/>
            <person name="Peterson J."/>
            <person name="Pham P.K."/>
            <person name="Rizzo M."/>
            <person name="Rooney T."/>
            <person name="Rowley D."/>
            <person name="Sakano H."/>
            <person name="Salzberg S.L."/>
            <person name="Schwartz J.R."/>
            <person name="Shinn P."/>
            <person name="Southwick A.M."/>
            <person name="Sun H."/>
            <person name="Tallon L.J."/>
            <person name="Tambunga G."/>
            <person name="Toriumi M.J."/>
            <person name="Town C.D."/>
            <person name="Utterback T."/>
            <person name="Van Aken S."/>
            <person name="Vaysberg M."/>
            <person name="Vysotskaia V.S."/>
            <person name="Walker M."/>
            <person name="Wu D."/>
            <person name="Yu G."/>
            <person name="Fraser C.M."/>
            <person name="Venter J.C."/>
            <person name="Davis R.W."/>
        </authorList>
    </citation>
    <scope>NUCLEOTIDE SEQUENCE [LARGE SCALE GENOMIC DNA]</scope>
    <source>
        <strain>cv. Columbia</strain>
    </source>
</reference>
<reference key="2">
    <citation type="journal article" date="2017" name="Plant J.">
        <title>Araport11: a complete reannotation of the Arabidopsis thaliana reference genome.</title>
        <authorList>
            <person name="Cheng C.Y."/>
            <person name="Krishnakumar V."/>
            <person name="Chan A.P."/>
            <person name="Thibaud-Nissen F."/>
            <person name="Schobel S."/>
            <person name="Town C.D."/>
        </authorList>
    </citation>
    <scope>GENOME REANNOTATION</scope>
    <source>
        <strain>cv. Columbia</strain>
    </source>
</reference>
<reference key="3">
    <citation type="submission" date="2004-09" db="EMBL/GenBank/DDBJ databases">
        <title>Large-scale analysis of RIKEN Arabidopsis full-length (RAFL) cDNAs.</title>
        <authorList>
            <person name="Totoki Y."/>
            <person name="Seki M."/>
            <person name="Ishida J."/>
            <person name="Nakajima M."/>
            <person name="Enju A."/>
            <person name="Kamiya A."/>
            <person name="Narusaka M."/>
            <person name="Shin-i T."/>
            <person name="Nakagawa M."/>
            <person name="Sakamoto N."/>
            <person name="Oishi K."/>
            <person name="Kohara Y."/>
            <person name="Kobayashi M."/>
            <person name="Toyoda A."/>
            <person name="Sakaki Y."/>
            <person name="Sakurai T."/>
            <person name="Iida K."/>
            <person name="Akiyama K."/>
            <person name="Satou M."/>
            <person name="Toyoda T."/>
            <person name="Konagaya A."/>
            <person name="Carninci P."/>
            <person name="Kawai J."/>
            <person name="Hayashizaki Y."/>
            <person name="Shinozaki K."/>
        </authorList>
    </citation>
    <scope>NUCLEOTIDE SEQUENCE [LARGE SCALE MRNA]</scope>
    <source>
        <strain>cv. Columbia</strain>
    </source>
</reference>
<reference key="4">
    <citation type="submission" date="2004-04" db="EMBL/GenBank/DDBJ databases">
        <title>Arabidopsis ORF clones.</title>
        <authorList>
            <person name="Kim C.J."/>
            <person name="Chen H."/>
            <person name="Cheuk R."/>
            <person name="Shinn P."/>
            <person name="Carninci P."/>
            <person name="Hayashizaki Y."/>
            <person name="Ishida J."/>
            <person name="Kamiya A."/>
            <person name="Kawai J."/>
            <person name="Narusaka M."/>
            <person name="Sakurai T."/>
            <person name="Satou M."/>
            <person name="Seki M."/>
            <person name="Shinozaki K."/>
            <person name="Ecker J.R."/>
        </authorList>
    </citation>
    <scope>NUCLEOTIDE SEQUENCE [LARGE SCALE MRNA] OF 62-478</scope>
</reference>
<reference key="5">
    <citation type="journal article" date="2013" name="Plant Cell">
        <title>Light-regulated hypocotyl elongation involves proteasome-dependent degradation of the microtubule regulatory protein WDL3 in Arabidopsis.</title>
        <authorList>
            <person name="Liu X."/>
            <person name="Qin T."/>
            <person name="Ma Q."/>
            <person name="Sun J."/>
            <person name="Liu Z."/>
            <person name="Yuan M."/>
            <person name="Mao T."/>
        </authorList>
    </citation>
    <scope>TISSUE SPECIFICITY</scope>
</reference>